<evidence type="ECO:0000255" key="1">
    <source>
        <dbReference type="HAMAP-Rule" id="MF_00473"/>
    </source>
</evidence>
<protein>
    <recommendedName>
        <fullName evidence="1">Glucose-6-phosphate isomerase</fullName>
        <shortName evidence="1">GPI</shortName>
        <ecNumber evidence="1">5.3.1.9</ecNumber>
    </recommendedName>
    <alternativeName>
        <fullName evidence="1">Phosphoglucose isomerase</fullName>
        <shortName evidence="1">PGI</shortName>
    </alternativeName>
    <alternativeName>
        <fullName evidence="1">Phosphohexose isomerase</fullName>
        <shortName evidence="1">PHI</shortName>
    </alternativeName>
</protein>
<organism>
    <name type="scientific">Shewanella oneidensis (strain ATCC 700550 / JCM 31522 / CIP 106686 / LMG 19005 / NCIMB 14063 / MR-1)</name>
    <dbReference type="NCBI Taxonomy" id="211586"/>
    <lineage>
        <taxon>Bacteria</taxon>
        <taxon>Pseudomonadati</taxon>
        <taxon>Pseudomonadota</taxon>
        <taxon>Gammaproteobacteria</taxon>
        <taxon>Alteromonadales</taxon>
        <taxon>Shewanellaceae</taxon>
        <taxon>Shewanella</taxon>
    </lineage>
</organism>
<sequence length="545" mass="59662">MTILTQSTTWQALSAHSQDIPHMRELFAADPARFTKMSLSSCGLFLDYSKNRATPETLNLLFALAQEAKLDAKIKAMFAGDIINTTEKRAVLHTALRNTAEQCIIAEGQDIVPEVQQTLNKMQQFVTSVTSGQWKGYTGKAITDIVSIGIGGSFLGPKIVSQALRPYWITGLNCHFVANVDGTSISEKLKLLDPETTLFIMSSKSFGTQETLTNTLTAKAWFLAKGGSQSDVAKHFAAVTSNVVKATGFGIDANNIFPMWDWVGGRYSLWSAIGLPIALLIGMDNFRALLKGAHQMDTHFANAPLTENMPVIMGLLSLWYGNFFNAQSHVVLTYDHYLRGLPAYFQQLDMESNGKSVTLNGTHVDYSTGPVIWGGEGTNGQHAYHQLLHQGTALIPADFIMPLQSHNPIGEHHDQLASNCFGQTQALMQGRTLDEALAELSKSALSNEEKLLIAKHKVMSGNKPSNTLLMDKLTPETLGALIALYEHRTFVQGAIWDINSFDQWGVELGKTLGNDVLTRIGADQEATVLDASSNGLINLYRRGKI</sequence>
<comment type="function">
    <text evidence="1">Catalyzes the reversible isomerization of glucose-6-phosphate to fructose-6-phosphate.</text>
</comment>
<comment type="catalytic activity">
    <reaction evidence="1">
        <text>alpha-D-glucose 6-phosphate = beta-D-fructose 6-phosphate</text>
        <dbReference type="Rhea" id="RHEA:11816"/>
        <dbReference type="ChEBI" id="CHEBI:57634"/>
        <dbReference type="ChEBI" id="CHEBI:58225"/>
        <dbReference type="EC" id="5.3.1.9"/>
    </reaction>
</comment>
<comment type="pathway">
    <text evidence="1">Carbohydrate biosynthesis; gluconeogenesis.</text>
</comment>
<comment type="pathway">
    <text evidence="1">Carbohydrate degradation; glycolysis; D-glyceraldehyde 3-phosphate and glycerone phosphate from D-glucose: step 2/4.</text>
</comment>
<comment type="subcellular location">
    <subcellularLocation>
        <location evidence="1">Cytoplasm</location>
    </subcellularLocation>
</comment>
<comment type="similarity">
    <text evidence="1">Belongs to the GPI family.</text>
</comment>
<accession>Q8EBH1</accession>
<name>G6PI_SHEON</name>
<feature type="chain" id="PRO_0000180724" description="Glucose-6-phosphate isomerase">
    <location>
        <begin position="1"/>
        <end position="545"/>
    </location>
</feature>
<feature type="active site" description="Proton donor" evidence="1">
    <location>
        <position position="351"/>
    </location>
</feature>
<feature type="active site" evidence="1">
    <location>
        <position position="382"/>
    </location>
</feature>
<feature type="active site" evidence="1">
    <location>
        <position position="510"/>
    </location>
</feature>
<reference key="1">
    <citation type="journal article" date="2002" name="Nat. Biotechnol.">
        <title>Genome sequence of the dissimilatory metal ion-reducing bacterium Shewanella oneidensis.</title>
        <authorList>
            <person name="Heidelberg J.F."/>
            <person name="Paulsen I.T."/>
            <person name="Nelson K.E."/>
            <person name="Gaidos E.J."/>
            <person name="Nelson W.C."/>
            <person name="Read T.D."/>
            <person name="Eisen J.A."/>
            <person name="Seshadri R."/>
            <person name="Ward N.L."/>
            <person name="Methe B.A."/>
            <person name="Clayton R.A."/>
            <person name="Meyer T."/>
            <person name="Tsapin A."/>
            <person name="Scott J."/>
            <person name="Beanan M.J."/>
            <person name="Brinkac L.M."/>
            <person name="Daugherty S.C."/>
            <person name="DeBoy R.T."/>
            <person name="Dodson R.J."/>
            <person name="Durkin A.S."/>
            <person name="Haft D.H."/>
            <person name="Kolonay J.F."/>
            <person name="Madupu R."/>
            <person name="Peterson J.D."/>
            <person name="Umayam L.A."/>
            <person name="White O."/>
            <person name="Wolf A.M."/>
            <person name="Vamathevan J.J."/>
            <person name="Weidman J.F."/>
            <person name="Impraim M."/>
            <person name="Lee K."/>
            <person name="Berry K.J."/>
            <person name="Lee C."/>
            <person name="Mueller J."/>
            <person name="Khouri H.M."/>
            <person name="Gill J."/>
            <person name="Utterback T.R."/>
            <person name="McDonald L.A."/>
            <person name="Feldblyum T.V."/>
            <person name="Smith H.O."/>
            <person name="Venter J.C."/>
            <person name="Nealson K.H."/>
            <person name="Fraser C.M."/>
        </authorList>
    </citation>
    <scope>NUCLEOTIDE SEQUENCE [LARGE SCALE GENOMIC DNA]</scope>
    <source>
        <strain>ATCC 700550 / JCM 31522 / CIP 106686 / LMG 19005 / NCIMB 14063 / MR-1</strain>
    </source>
</reference>
<keyword id="KW-0963">Cytoplasm</keyword>
<keyword id="KW-0312">Gluconeogenesis</keyword>
<keyword id="KW-0324">Glycolysis</keyword>
<keyword id="KW-0413">Isomerase</keyword>
<keyword id="KW-1185">Reference proteome</keyword>
<proteinExistence type="inferred from homology"/>
<dbReference type="EC" id="5.3.1.9" evidence="1"/>
<dbReference type="EMBL" id="AE014299">
    <property type="protein sequence ID" value="AAN56538.1"/>
    <property type="molecule type" value="Genomic_DNA"/>
</dbReference>
<dbReference type="RefSeq" id="NP_719094.1">
    <property type="nucleotide sequence ID" value="NC_004347.2"/>
</dbReference>
<dbReference type="RefSeq" id="WP_011073376.1">
    <property type="nucleotide sequence ID" value="NC_004347.2"/>
</dbReference>
<dbReference type="SMR" id="Q8EBH1"/>
<dbReference type="STRING" id="211586.SO_3547"/>
<dbReference type="PaxDb" id="211586-SO_3547"/>
<dbReference type="KEGG" id="son:SO_3547"/>
<dbReference type="PATRIC" id="fig|211586.12.peg.3441"/>
<dbReference type="eggNOG" id="COG0166">
    <property type="taxonomic scope" value="Bacteria"/>
</dbReference>
<dbReference type="HOGENOM" id="CLU_017947_3_1_6"/>
<dbReference type="OrthoDB" id="140919at2"/>
<dbReference type="PhylomeDB" id="Q8EBH1"/>
<dbReference type="BioCyc" id="SONE211586:G1GMP-3307-MONOMER"/>
<dbReference type="UniPathway" id="UPA00109">
    <property type="reaction ID" value="UER00181"/>
</dbReference>
<dbReference type="UniPathway" id="UPA00138"/>
<dbReference type="Proteomes" id="UP000008186">
    <property type="component" value="Chromosome"/>
</dbReference>
<dbReference type="GO" id="GO:0005829">
    <property type="term" value="C:cytosol"/>
    <property type="evidence" value="ECO:0000318"/>
    <property type="project" value="GO_Central"/>
</dbReference>
<dbReference type="GO" id="GO:0097367">
    <property type="term" value="F:carbohydrate derivative binding"/>
    <property type="evidence" value="ECO:0007669"/>
    <property type="project" value="InterPro"/>
</dbReference>
<dbReference type="GO" id="GO:0004347">
    <property type="term" value="F:glucose-6-phosphate isomerase activity"/>
    <property type="evidence" value="ECO:0000318"/>
    <property type="project" value="GO_Central"/>
</dbReference>
<dbReference type="GO" id="GO:0048029">
    <property type="term" value="F:monosaccharide binding"/>
    <property type="evidence" value="ECO:0000318"/>
    <property type="project" value="GO_Central"/>
</dbReference>
<dbReference type="GO" id="GO:0006094">
    <property type="term" value="P:gluconeogenesis"/>
    <property type="evidence" value="ECO:0000318"/>
    <property type="project" value="GO_Central"/>
</dbReference>
<dbReference type="GO" id="GO:0051156">
    <property type="term" value="P:glucose 6-phosphate metabolic process"/>
    <property type="evidence" value="ECO:0000318"/>
    <property type="project" value="GO_Central"/>
</dbReference>
<dbReference type="GO" id="GO:0006096">
    <property type="term" value="P:glycolytic process"/>
    <property type="evidence" value="ECO:0000318"/>
    <property type="project" value="GO_Central"/>
</dbReference>
<dbReference type="CDD" id="cd05015">
    <property type="entry name" value="SIS_PGI_1"/>
    <property type="match status" value="1"/>
</dbReference>
<dbReference type="CDD" id="cd05016">
    <property type="entry name" value="SIS_PGI_2"/>
    <property type="match status" value="1"/>
</dbReference>
<dbReference type="FunFam" id="3.40.50.10490:FF:000018">
    <property type="entry name" value="Glucose-6-phosphate isomerase"/>
    <property type="match status" value="1"/>
</dbReference>
<dbReference type="Gene3D" id="1.10.1390.10">
    <property type="match status" value="1"/>
</dbReference>
<dbReference type="Gene3D" id="3.40.50.10490">
    <property type="entry name" value="Glucose-6-phosphate isomerase like protein, domain 1"/>
    <property type="match status" value="2"/>
</dbReference>
<dbReference type="HAMAP" id="MF_00473">
    <property type="entry name" value="G6P_isomerase"/>
    <property type="match status" value="1"/>
</dbReference>
<dbReference type="InterPro" id="IPR001672">
    <property type="entry name" value="G6P_Isomerase"/>
</dbReference>
<dbReference type="InterPro" id="IPR023096">
    <property type="entry name" value="G6P_Isomerase_C"/>
</dbReference>
<dbReference type="InterPro" id="IPR018189">
    <property type="entry name" value="Phosphoglucose_isomerase_CS"/>
</dbReference>
<dbReference type="InterPro" id="IPR046348">
    <property type="entry name" value="SIS_dom_sf"/>
</dbReference>
<dbReference type="InterPro" id="IPR035476">
    <property type="entry name" value="SIS_PGI_1"/>
</dbReference>
<dbReference type="InterPro" id="IPR035482">
    <property type="entry name" value="SIS_PGI_2"/>
</dbReference>
<dbReference type="NCBIfam" id="NF001211">
    <property type="entry name" value="PRK00179.1"/>
    <property type="match status" value="1"/>
</dbReference>
<dbReference type="PANTHER" id="PTHR11469">
    <property type="entry name" value="GLUCOSE-6-PHOSPHATE ISOMERASE"/>
    <property type="match status" value="1"/>
</dbReference>
<dbReference type="PANTHER" id="PTHR11469:SF1">
    <property type="entry name" value="GLUCOSE-6-PHOSPHATE ISOMERASE"/>
    <property type="match status" value="1"/>
</dbReference>
<dbReference type="Pfam" id="PF00342">
    <property type="entry name" value="PGI"/>
    <property type="match status" value="1"/>
</dbReference>
<dbReference type="PRINTS" id="PR00662">
    <property type="entry name" value="G6PISOMERASE"/>
</dbReference>
<dbReference type="SUPFAM" id="SSF53697">
    <property type="entry name" value="SIS domain"/>
    <property type="match status" value="1"/>
</dbReference>
<dbReference type="PROSITE" id="PS00765">
    <property type="entry name" value="P_GLUCOSE_ISOMERASE_1"/>
    <property type="match status" value="1"/>
</dbReference>
<dbReference type="PROSITE" id="PS00174">
    <property type="entry name" value="P_GLUCOSE_ISOMERASE_2"/>
    <property type="match status" value="1"/>
</dbReference>
<dbReference type="PROSITE" id="PS51463">
    <property type="entry name" value="P_GLUCOSE_ISOMERASE_3"/>
    <property type="match status" value="1"/>
</dbReference>
<gene>
    <name evidence="1" type="primary">pgi</name>
    <name type="ordered locus">SO_3547</name>
</gene>